<dbReference type="EMBL" id="CH474015">
    <property type="protein sequence ID" value="EDL85702.1"/>
    <property type="molecule type" value="Genomic_DNA"/>
</dbReference>
<dbReference type="RefSeq" id="NP_001102419.1">
    <property type="nucleotide sequence ID" value="NM_001108949.1"/>
</dbReference>
<dbReference type="RefSeq" id="XP_006233013.1">
    <property type="nucleotide sequence ID" value="XM_006232951.5"/>
</dbReference>
<dbReference type="RefSeq" id="XP_038958709.1">
    <property type="nucleotide sequence ID" value="XM_039102781.2"/>
</dbReference>
<dbReference type="RefSeq" id="XP_063138343.1">
    <property type="nucleotide sequence ID" value="XM_063282273.1"/>
</dbReference>
<dbReference type="SMR" id="D3ZWE7"/>
<dbReference type="FunCoup" id="D3ZWE7">
    <property type="interactions" value="52"/>
</dbReference>
<dbReference type="STRING" id="10116.ENSRNOP00000063863"/>
<dbReference type="CarbonylDB" id="D3ZWE7"/>
<dbReference type="iPTMnet" id="D3ZWE7"/>
<dbReference type="PhosphoSitePlus" id="D3ZWE7"/>
<dbReference type="PaxDb" id="10116-ENSRNOP00000063863"/>
<dbReference type="Ensembl" id="ENSRNOT00000066821.2">
    <property type="protein sequence ID" value="ENSRNOP00000063863.1"/>
    <property type="gene ID" value="ENSRNOG00000021160.6"/>
</dbReference>
<dbReference type="GeneID" id="365868"/>
<dbReference type="KEGG" id="rno:365868"/>
<dbReference type="AGR" id="RGD:1564960"/>
<dbReference type="CTD" id="84072"/>
<dbReference type="RGD" id="1564960">
    <property type="gene designation" value="Hormad1"/>
</dbReference>
<dbReference type="eggNOG" id="KOG4652">
    <property type="taxonomic scope" value="Eukaryota"/>
</dbReference>
<dbReference type="GeneTree" id="ENSGT00390000018130"/>
<dbReference type="HOGENOM" id="CLU_058638_1_0_1"/>
<dbReference type="InParanoid" id="D3ZWE7"/>
<dbReference type="OMA" id="IFQNKMV"/>
<dbReference type="OrthoDB" id="1928087at2759"/>
<dbReference type="TreeFam" id="TF313989"/>
<dbReference type="PRO" id="PR:D3ZWE7"/>
<dbReference type="Proteomes" id="UP000002494">
    <property type="component" value="Chromosome 2"/>
</dbReference>
<dbReference type="Proteomes" id="UP000234681">
    <property type="component" value="Chromosome 2"/>
</dbReference>
<dbReference type="Bgee" id="ENSRNOG00000021160">
    <property type="expression patterns" value="Expressed in testis and 3 other cell types or tissues"/>
</dbReference>
<dbReference type="GO" id="GO:0005694">
    <property type="term" value="C:chromosome"/>
    <property type="evidence" value="ECO:0000250"/>
    <property type="project" value="UniProtKB"/>
</dbReference>
<dbReference type="GO" id="GO:0000794">
    <property type="term" value="C:condensed nuclear chromosome"/>
    <property type="evidence" value="ECO:0000266"/>
    <property type="project" value="RGD"/>
</dbReference>
<dbReference type="GO" id="GO:0005634">
    <property type="term" value="C:nucleus"/>
    <property type="evidence" value="ECO:0000250"/>
    <property type="project" value="UniProtKB"/>
</dbReference>
<dbReference type="GO" id="GO:0000795">
    <property type="term" value="C:synaptonemal complex"/>
    <property type="evidence" value="ECO:0000266"/>
    <property type="project" value="RGD"/>
</dbReference>
<dbReference type="GO" id="GO:0001824">
    <property type="term" value="P:blastocyst development"/>
    <property type="evidence" value="ECO:0000250"/>
    <property type="project" value="UniProtKB"/>
</dbReference>
<dbReference type="GO" id="GO:0007129">
    <property type="term" value="P:homologous chromosome pairing at meiosis"/>
    <property type="evidence" value="ECO:0000266"/>
    <property type="project" value="RGD"/>
</dbReference>
<dbReference type="GO" id="GO:0051321">
    <property type="term" value="P:meiotic cell cycle"/>
    <property type="evidence" value="ECO:0000250"/>
    <property type="project" value="UniProtKB"/>
</dbReference>
<dbReference type="GO" id="GO:0042138">
    <property type="term" value="P:meiotic DNA double-strand break formation"/>
    <property type="evidence" value="ECO:0000250"/>
    <property type="project" value="UniProtKB"/>
</dbReference>
<dbReference type="GO" id="GO:0051598">
    <property type="term" value="P:meiotic recombination checkpoint signaling"/>
    <property type="evidence" value="ECO:0000250"/>
    <property type="project" value="UniProtKB"/>
</dbReference>
<dbReference type="GO" id="GO:0051177">
    <property type="term" value="P:meiotic sister chromatid cohesion"/>
    <property type="evidence" value="ECO:0000250"/>
    <property type="project" value="UniProtKB"/>
</dbReference>
<dbReference type="GO" id="GO:0048477">
    <property type="term" value="P:oogenesis"/>
    <property type="evidence" value="ECO:0000250"/>
    <property type="project" value="UniProtKB"/>
</dbReference>
<dbReference type="GO" id="GO:0060629">
    <property type="term" value="P:regulation of homologous chromosome segregation"/>
    <property type="evidence" value="ECO:0000250"/>
    <property type="project" value="UniProtKB"/>
</dbReference>
<dbReference type="GO" id="GO:0007283">
    <property type="term" value="P:spermatogenesis"/>
    <property type="evidence" value="ECO:0000250"/>
    <property type="project" value="UniProtKB"/>
</dbReference>
<dbReference type="GO" id="GO:0007130">
    <property type="term" value="P:synaptonemal complex assembly"/>
    <property type="evidence" value="ECO:0000250"/>
    <property type="project" value="UniProtKB"/>
</dbReference>
<dbReference type="FunFam" id="3.30.900.10:FF:000006">
    <property type="entry name" value="HORMA domain-containing protein 1"/>
    <property type="match status" value="1"/>
</dbReference>
<dbReference type="Gene3D" id="3.30.900.10">
    <property type="entry name" value="HORMA domain"/>
    <property type="match status" value="1"/>
</dbReference>
<dbReference type="InterPro" id="IPR003511">
    <property type="entry name" value="HORMA_dom"/>
</dbReference>
<dbReference type="InterPro" id="IPR036570">
    <property type="entry name" value="HORMA_dom_sf"/>
</dbReference>
<dbReference type="InterPro" id="IPR051294">
    <property type="entry name" value="HORMA_MeioticProgression"/>
</dbReference>
<dbReference type="PANTHER" id="PTHR48225">
    <property type="entry name" value="HORMA DOMAIN-CONTAINING PROTEIN 1"/>
    <property type="match status" value="1"/>
</dbReference>
<dbReference type="PANTHER" id="PTHR48225:SF1">
    <property type="entry name" value="HORMA DOMAIN-CONTAINING PROTEIN 1"/>
    <property type="match status" value="1"/>
</dbReference>
<dbReference type="Pfam" id="PF02301">
    <property type="entry name" value="HORMA"/>
    <property type="match status" value="1"/>
</dbReference>
<dbReference type="SUPFAM" id="SSF56019">
    <property type="entry name" value="The spindle assembly checkpoint protein mad2"/>
    <property type="match status" value="1"/>
</dbReference>
<dbReference type="PROSITE" id="PS50815">
    <property type="entry name" value="HORMA"/>
    <property type="match status" value="1"/>
</dbReference>
<keyword id="KW-0158">Chromosome</keyword>
<keyword id="KW-0221">Differentiation</keyword>
<keyword id="KW-0469">Meiosis</keyword>
<keyword id="KW-0539">Nucleus</keyword>
<keyword id="KW-0896">Oogenesis</keyword>
<keyword id="KW-0597">Phosphoprotein</keyword>
<keyword id="KW-1185">Reference proteome</keyword>
<keyword id="KW-0744">Spermatogenesis</keyword>
<proteinExistence type="evidence at protein level"/>
<comment type="function">
    <text evidence="2">Plays a key role in meiotic progression. Regulates 3 different functions during meiosis: ensures that sufficient numbers of processed DNA double-strand breaks (DSBs) are available for successful homology search by increasing the steady-state numbers of single-stranded DSB ends. Promotes synaptonemal-complex formation independently of its role in homology search. Plays a key role in the male mid-pachytene checkpoint and the female meiotic prophase checkpoint: required for efficient build-up of ATR activity on unsynapsed chromosome regions, a process believed to form the basis of meiotic silencing of unsynapsed chromatin (MSUC) and meiotic prophase quality control in both sexes.</text>
</comment>
<comment type="subunit">
    <text evidence="2">Interacts with HORMAD2. Interacts with IHO1.</text>
</comment>
<comment type="subcellular location">
    <subcellularLocation>
        <location evidence="2">Nucleus</location>
    </subcellularLocation>
    <subcellularLocation>
        <location evidence="2">Chromosome</location>
    </subcellularLocation>
    <text evidence="2">Preferentially localizes to unsynapsed or desynapsed chromosomal regions during the prophase I stage of meiosis. TRIP13 is required for depletion from synapsed chromosomes. The expression of the phosphorylated form at Ser-375 is restricted to unsynapsed chromosomal regions (By similarity).</text>
</comment>
<comment type="PTM">
    <text evidence="2">Phosphorylated at Ser-375 in a SPO11-dependent manner.</text>
</comment>
<organism>
    <name type="scientific">Rattus norvegicus</name>
    <name type="common">Rat</name>
    <dbReference type="NCBI Taxonomy" id="10116"/>
    <lineage>
        <taxon>Eukaryota</taxon>
        <taxon>Metazoa</taxon>
        <taxon>Chordata</taxon>
        <taxon>Craniata</taxon>
        <taxon>Vertebrata</taxon>
        <taxon>Euteleostomi</taxon>
        <taxon>Mammalia</taxon>
        <taxon>Eutheria</taxon>
        <taxon>Euarchontoglires</taxon>
        <taxon>Glires</taxon>
        <taxon>Rodentia</taxon>
        <taxon>Myomorpha</taxon>
        <taxon>Muroidea</taxon>
        <taxon>Muridae</taxon>
        <taxon>Murinae</taxon>
        <taxon>Rattus</taxon>
    </lineage>
</organism>
<gene>
    <name type="primary">Hormad1</name>
</gene>
<accession>D3ZWE7</accession>
<accession>D3ZZR2</accession>
<protein>
    <recommendedName>
        <fullName>HORMA domain-containing protein 1</fullName>
    </recommendedName>
</protein>
<name>HORM1_RAT</name>
<reference key="1">
    <citation type="submission" date="2005-09" db="EMBL/GenBank/DDBJ databases">
        <authorList>
            <person name="Mural R.J."/>
            <person name="Adams M.D."/>
            <person name="Myers E.W."/>
            <person name="Smith H.O."/>
            <person name="Venter J.C."/>
        </authorList>
    </citation>
    <scope>NUCLEOTIDE SEQUENCE [LARGE SCALE GENOMIC DNA]</scope>
</reference>
<reference key="2">
    <citation type="journal article" date="2012" name="Nat. Commun.">
        <title>Quantitative maps of protein phosphorylation sites across 14 different rat organs and tissues.</title>
        <authorList>
            <person name="Lundby A."/>
            <person name="Secher A."/>
            <person name="Lage K."/>
            <person name="Nordsborg N.B."/>
            <person name="Dmytriyev A."/>
            <person name="Lundby C."/>
            <person name="Olsen J.V."/>
        </authorList>
    </citation>
    <scope>IDENTIFICATION BY MASS SPECTROMETRY [LARGE SCALE ANALYSIS]</scope>
</reference>
<sequence length="392" mass="44885">MATMQLRRTASMSALVFPNKISTEQQSLMFVKRLLAVSVSCITYLRGIFPERAYGTRYLDDLCVKILKEDKNCPGSSQLVKWMLGCYDALQKKYLRMIILAVYTNPEDPQTISECYQFKFKYTKNGPIMDFISKNQNNKSSTTSADTKKASILLIRKIYVLMQNLGPLPNDVCLTMKLFYYDEVTPPDYQPPGFKDGDCEGVIFDGDPTYLNVGEVPTPFHTFRLKVTTEKERMENIDSAILTPKDSKIPFQKILMDKDDVEDENHNNFDIKTKMNEQNENSGTSEIKEPNLDCKEEEIMQFKKNQSSSISQCQVEQLISKTSELDVSESKTRSGKIFQCKMVNGNQQGQISKENRKRSLRQSGKTVLHILESSSQESVLKRRRVSEPNEHT</sequence>
<evidence type="ECO:0000250" key="1"/>
<evidence type="ECO:0000250" key="2">
    <source>
        <dbReference type="UniProtKB" id="Q9D5T7"/>
    </source>
</evidence>
<evidence type="ECO:0000255" key="3">
    <source>
        <dbReference type="PROSITE-ProRule" id="PRU00109"/>
    </source>
</evidence>
<evidence type="ECO:0000256" key="4">
    <source>
        <dbReference type="SAM" id="MobiDB-lite"/>
    </source>
</evidence>
<feature type="chain" id="PRO_0000410914" description="HORMA domain-containing protein 1">
    <location>
        <begin position="1"/>
        <end position="392"/>
    </location>
</feature>
<feature type="domain" description="HORMA" evidence="3">
    <location>
        <begin position="25"/>
        <end position="227"/>
    </location>
</feature>
<feature type="region of interest" description="Disordered" evidence="4">
    <location>
        <begin position="271"/>
        <end position="292"/>
    </location>
</feature>
<feature type="region of interest" description="Disordered" evidence="4">
    <location>
        <begin position="371"/>
        <end position="392"/>
    </location>
</feature>
<feature type="short sequence motif" description="Nuclear localization signal" evidence="1">
    <location>
        <begin position="381"/>
        <end position="384"/>
    </location>
</feature>
<feature type="modified residue" description="Phosphoserine" evidence="2">
    <location>
        <position position="374"/>
    </location>
</feature>